<sequence length="129" mass="14066">MGGEGPGSDDIVKKMAQLMMQGAVMLDKTCPADGLPLFKLKTGDVVCPVHGKVVIVASDEEARDVEVEEIIREVRYRAARNVMKGLEEDNVDTVSKWLGVLETAERILAIRRGSRQGQGSVRGEGRESK</sequence>
<accession>Q9YFP2</accession>
<comment type="similarity">
    <text evidence="1">Belongs to the UPF0148 family.</text>
</comment>
<name>Y207_AERPE</name>
<proteinExistence type="inferred from homology"/>
<gene>
    <name type="ordered locus">APE_0207</name>
</gene>
<reference key="1">
    <citation type="journal article" date="1999" name="DNA Res.">
        <title>Complete genome sequence of an aerobic hyper-thermophilic crenarchaeon, Aeropyrum pernix K1.</title>
        <authorList>
            <person name="Kawarabayasi Y."/>
            <person name="Hino Y."/>
            <person name="Horikawa H."/>
            <person name="Yamazaki S."/>
            <person name="Haikawa Y."/>
            <person name="Jin-no K."/>
            <person name="Takahashi M."/>
            <person name="Sekine M."/>
            <person name="Baba S."/>
            <person name="Ankai A."/>
            <person name="Kosugi H."/>
            <person name="Hosoyama A."/>
            <person name="Fukui S."/>
            <person name="Nagai Y."/>
            <person name="Nishijima K."/>
            <person name="Nakazawa H."/>
            <person name="Takamiya M."/>
            <person name="Masuda S."/>
            <person name="Funahashi T."/>
            <person name="Tanaka T."/>
            <person name="Kudoh Y."/>
            <person name="Yamazaki J."/>
            <person name="Kushida N."/>
            <person name="Oguchi A."/>
            <person name="Aoki K."/>
            <person name="Kubota K."/>
            <person name="Nakamura Y."/>
            <person name="Nomura N."/>
            <person name="Sako Y."/>
            <person name="Kikuchi H."/>
        </authorList>
    </citation>
    <scope>NUCLEOTIDE SEQUENCE [LARGE SCALE GENOMIC DNA]</scope>
    <source>
        <strain>ATCC 700893 / DSM 11879 / JCM 9820 / NBRC 100138 / K1</strain>
    </source>
</reference>
<feature type="chain" id="PRO_0000159854" description="UPF0148 protein APE_0207">
    <location>
        <begin position="1"/>
        <end position="129"/>
    </location>
</feature>
<keyword id="KW-1185">Reference proteome</keyword>
<organism>
    <name type="scientific">Aeropyrum pernix (strain ATCC 700893 / DSM 11879 / JCM 9820 / NBRC 100138 / K1)</name>
    <dbReference type="NCBI Taxonomy" id="272557"/>
    <lineage>
        <taxon>Archaea</taxon>
        <taxon>Thermoproteota</taxon>
        <taxon>Thermoprotei</taxon>
        <taxon>Desulfurococcales</taxon>
        <taxon>Desulfurococcaceae</taxon>
        <taxon>Aeropyrum</taxon>
    </lineage>
</organism>
<dbReference type="EMBL" id="BA000002">
    <property type="protein sequence ID" value="BAA79119.1"/>
    <property type="molecule type" value="Genomic_DNA"/>
</dbReference>
<dbReference type="PIR" id="E72777">
    <property type="entry name" value="E72777"/>
</dbReference>
<dbReference type="RefSeq" id="WP_010865568.1">
    <property type="nucleotide sequence ID" value="NC_000854.2"/>
</dbReference>
<dbReference type="SMR" id="Q9YFP2"/>
<dbReference type="STRING" id="272557.APE_0207"/>
<dbReference type="EnsemblBacteria" id="BAA79119">
    <property type="protein sequence ID" value="BAA79119"/>
    <property type="gene ID" value="APE_0207"/>
</dbReference>
<dbReference type="GeneID" id="1445728"/>
<dbReference type="KEGG" id="ape:APE_0207"/>
<dbReference type="PATRIC" id="fig|272557.25.peg.147"/>
<dbReference type="eggNOG" id="arCOG00578">
    <property type="taxonomic scope" value="Archaea"/>
</dbReference>
<dbReference type="Proteomes" id="UP000002518">
    <property type="component" value="Chromosome"/>
</dbReference>
<dbReference type="HAMAP" id="MF_00343">
    <property type="entry name" value="UPF0148"/>
    <property type="match status" value="1"/>
</dbReference>
<dbReference type="InterPro" id="IPR009563">
    <property type="entry name" value="SSSCA1"/>
</dbReference>
<dbReference type="InterPro" id="IPR022954">
    <property type="entry name" value="UPF0148"/>
</dbReference>
<dbReference type="NCBIfam" id="NF001647">
    <property type="entry name" value="PRK00420.1-4"/>
    <property type="match status" value="1"/>
</dbReference>
<dbReference type="Pfam" id="PF06677">
    <property type="entry name" value="Auto_anti-p27"/>
    <property type="match status" value="1"/>
</dbReference>
<protein>
    <recommendedName>
        <fullName>UPF0148 protein APE_0207</fullName>
    </recommendedName>
</protein>
<evidence type="ECO:0000305" key="1"/>